<dbReference type="EC" id="6.1.1.9" evidence="1"/>
<dbReference type="EMBL" id="CP001011">
    <property type="protein sequence ID" value="ACB91551.1"/>
    <property type="molecule type" value="Genomic_DNA"/>
</dbReference>
<dbReference type="RefSeq" id="WP_004087603.1">
    <property type="nucleotide sequence ID" value="NC_010577.1"/>
</dbReference>
<dbReference type="SMR" id="B2I6K9"/>
<dbReference type="KEGG" id="xfn:XfasM23_0094"/>
<dbReference type="HOGENOM" id="CLU_001493_0_2_6"/>
<dbReference type="Proteomes" id="UP000001698">
    <property type="component" value="Chromosome"/>
</dbReference>
<dbReference type="GO" id="GO:0005829">
    <property type="term" value="C:cytosol"/>
    <property type="evidence" value="ECO:0007669"/>
    <property type="project" value="TreeGrafter"/>
</dbReference>
<dbReference type="GO" id="GO:0002161">
    <property type="term" value="F:aminoacyl-tRNA deacylase activity"/>
    <property type="evidence" value="ECO:0007669"/>
    <property type="project" value="InterPro"/>
</dbReference>
<dbReference type="GO" id="GO:0005524">
    <property type="term" value="F:ATP binding"/>
    <property type="evidence" value="ECO:0007669"/>
    <property type="project" value="UniProtKB-UniRule"/>
</dbReference>
<dbReference type="GO" id="GO:0004832">
    <property type="term" value="F:valine-tRNA ligase activity"/>
    <property type="evidence" value="ECO:0007669"/>
    <property type="project" value="UniProtKB-UniRule"/>
</dbReference>
<dbReference type="GO" id="GO:0006438">
    <property type="term" value="P:valyl-tRNA aminoacylation"/>
    <property type="evidence" value="ECO:0007669"/>
    <property type="project" value="UniProtKB-UniRule"/>
</dbReference>
<dbReference type="CDD" id="cd07962">
    <property type="entry name" value="Anticodon_Ia_Val"/>
    <property type="match status" value="1"/>
</dbReference>
<dbReference type="CDD" id="cd00817">
    <property type="entry name" value="ValRS_core"/>
    <property type="match status" value="1"/>
</dbReference>
<dbReference type="FunFam" id="1.10.287.380:FF:000001">
    <property type="entry name" value="Valine--tRNA ligase"/>
    <property type="match status" value="1"/>
</dbReference>
<dbReference type="FunFam" id="3.40.50.620:FF:000032">
    <property type="entry name" value="Valine--tRNA ligase"/>
    <property type="match status" value="1"/>
</dbReference>
<dbReference type="FunFam" id="3.40.50.620:FF:000098">
    <property type="entry name" value="Valine--tRNA ligase"/>
    <property type="match status" value="1"/>
</dbReference>
<dbReference type="Gene3D" id="3.40.50.620">
    <property type="entry name" value="HUPs"/>
    <property type="match status" value="2"/>
</dbReference>
<dbReference type="Gene3D" id="1.10.730.10">
    <property type="entry name" value="Isoleucyl-tRNA Synthetase, Domain 1"/>
    <property type="match status" value="1"/>
</dbReference>
<dbReference type="Gene3D" id="1.10.287.380">
    <property type="entry name" value="Valyl-tRNA synthetase, C-terminal domain"/>
    <property type="match status" value="1"/>
</dbReference>
<dbReference type="Gene3D" id="3.90.740.10">
    <property type="entry name" value="Valyl/Leucyl/Isoleucyl-tRNA synthetase, editing domain"/>
    <property type="match status" value="2"/>
</dbReference>
<dbReference type="HAMAP" id="MF_02004">
    <property type="entry name" value="Val_tRNA_synth_type1"/>
    <property type="match status" value="1"/>
</dbReference>
<dbReference type="InterPro" id="IPR001412">
    <property type="entry name" value="aa-tRNA-synth_I_CS"/>
</dbReference>
<dbReference type="InterPro" id="IPR002300">
    <property type="entry name" value="aa-tRNA-synth_Ia"/>
</dbReference>
<dbReference type="InterPro" id="IPR033705">
    <property type="entry name" value="Anticodon_Ia_Val"/>
</dbReference>
<dbReference type="InterPro" id="IPR013155">
    <property type="entry name" value="M/V/L/I-tRNA-synth_anticd-bd"/>
</dbReference>
<dbReference type="InterPro" id="IPR014729">
    <property type="entry name" value="Rossmann-like_a/b/a_fold"/>
</dbReference>
<dbReference type="InterPro" id="IPR010978">
    <property type="entry name" value="tRNA-bd_arm"/>
</dbReference>
<dbReference type="InterPro" id="IPR009080">
    <property type="entry name" value="tRNAsynth_Ia_anticodon-bd"/>
</dbReference>
<dbReference type="InterPro" id="IPR037118">
    <property type="entry name" value="Val-tRNA_synth_C_sf"/>
</dbReference>
<dbReference type="InterPro" id="IPR019499">
    <property type="entry name" value="Val-tRNA_synth_tRNA-bd"/>
</dbReference>
<dbReference type="InterPro" id="IPR009008">
    <property type="entry name" value="Val/Leu/Ile-tRNA-synth_edit"/>
</dbReference>
<dbReference type="InterPro" id="IPR002303">
    <property type="entry name" value="Valyl-tRNA_ligase"/>
</dbReference>
<dbReference type="NCBIfam" id="NF004349">
    <property type="entry name" value="PRK05729.1"/>
    <property type="match status" value="1"/>
</dbReference>
<dbReference type="NCBIfam" id="TIGR00422">
    <property type="entry name" value="valS"/>
    <property type="match status" value="1"/>
</dbReference>
<dbReference type="PANTHER" id="PTHR11946:SF93">
    <property type="entry name" value="VALINE--TRNA LIGASE, CHLOROPLASTIC_MITOCHONDRIAL 2"/>
    <property type="match status" value="1"/>
</dbReference>
<dbReference type="PANTHER" id="PTHR11946">
    <property type="entry name" value="VALYL-TRNA SYNTHETASES"/>
    <property type="match status" value="1"/>
</dbReference>
<dbReference type="Pfam" id="PF08264">
    <property type="entry name" value="Anticodon_1"/>
    <property type="match status" value="1"/>
</dbReference>
<dbReference type="Pfam" id="PF00133">
    <property type="entry name" value="tRNA-synt_1"/>
    <property type="match status" value="1"/>
</dbReference>
<dbReference type="Pfam" id="PF10458">
    <property type="entry name" value="Val_tRNA-synt_C"/>
    <property type="match status" value="1"/>
</dbReference>
<dbReference type="PRINTS" id="PR00986">
    <property type="entry name" value="TRNASYNTHVAL"/>
</dbReference>
<dbReference type="SUPFAM" id="SSF47323">
    <property type="entry name" value="Anticodon-binding domain of a subclass of class I aminoacyl-tRNA synthetases"/>
    <property type="match status" value="1"/>
</dbReference>
<dbReference type="SUPFAM" id="SSF52374">
    <property type="entry name" value="Nucleotidylyl transferase"/>
    <property type="match status" value="1"/>
</dbReference>
<dbReference type="SUPFAM" id="SSF46589">
    <property type="entry name" value="tRNA-binding arm"/>
    <property type="match status" value="1"/>
</dbReference>
<dbReference type="SUPFAM" id="SSF50677">
    <property type="entry name" value="ValRS/IleRS/LeuRS editing domain"/>
    <property type="match status" value="1"/>
</dbReference>
<dbReference type="PROSITE" id="PS00178">
    <property type="entry name" value="AA_TRNA_LIGASE_I"/>
    <property type="match status" value="1"/>
</dbReference>
<organism>
    <name type="scientific">Xylella fastidiosa (strain M23)</name>
    <dbReference type="NCBI Taxonomy" id="405441"/>
    <lineage>
        <taxon>Bacteria</taxon>
        <taxon>Pseudomonadati</taxon>
        <taxon>Pseudomonadota</taxon>
        <taxon>Gammaproteobacteria</taxon>
        <taxon>Lysobacterales</taxon>
        <taxon>Lysobacteraceae</taxon>
        <taxon>Xylella</taxon>
    </lineage>
</organism>
<gene>
    <name evidence="1" type="primary">valS</name>
    <name type="ordered locus">XfasM23_0094</name>
</gene>
<name>SYV_XYLF2</name>
<reference key="1">
    <citation type="journal article" date="2010" name="J. Bacteriol.">
        <title>Whole genome sequences of two Xylella fastidiosa strains (M12 and M23) causing almond leaf scorch disease in California.</title>
        <authorList>
            <person name="Chen J."/>
            <person name="Xie G."/>
            <person name="Han S."/>
            <person name="Chertkov O."/>
            <person name="Sims D."/>
            <person name="Civerolo E.L."/>
        </authorList>
    </citation>
    <scope>NUCLEOTIDE SEQUENCE [LARGE SCALE GENOMIC DNA]</scope>
    <source>
        <strain>M23</strain>
    </source>
</reference>
<accession>B2I6K9</accession>
<protein>
    <recommendedName>
        <fullName evidence="1">Valine--tRNA ligase</fullName>
        <ecNumber evidence="1">6.1.1.9</ecNumber>
    </recommendedName>
    <alternativeName>
        <fullName evidence="1">Valyl-tRNA synthetase</fullName>
        <shortName evidence="1">ValRS</shortName>
    </alternativeName>
</protein>
<evidence type="ECO:0000255" key="1">
    <source>
        <dbReference type="HAMAP-Rule" id="MF_02004"/>
    </source>
</evidence>
<evidence type="ECO:0000256" key="2">
    <source>
        <dbReference type="SAM" id="MobiDB-lite"/>
    </source>
</evidence>
<comment type="function">
    <text evidence="1">Catalyzes the attachment of valine to tRNA(Val). As ValRS can inadvertently accommodate and process structurally similar amino acids such as threonine, to avoid such errors, it has a 'posttransfer' editing activity that hydrolyzes mischarged Thr-tRNA(Val) in a tRNA-dependent manner.</text>
</comment>
<comment type="catalytic activity">
    <reaction evidence="1">
        <text>tRNA(Val) + L-valine + ATP = L-valyl-tRNA(Val) + AMP + diphosphate</text>
        <dbReference type="Rhea" id="RHEA:10704"/>
        <dbReference type="Rhea" id="RHEA-COMP:9672"/>
        <dbReference type="Rhea" id="RHEA-COMP:9708"/>
        <dbReference type="ChEBI" id="CHEBI:30616"/>
        <dbReference type="ChEBI" id="CHEBI:33019"/>
        <dbReference type="ChEBI" id="CHEBI:57762"/>
        <dbReference type="ChEBI" id="CHEBI:78442"/>
        <dbReference type="ChEBI" id="CHEBI:78537"/>
        <dbReference type="ChEBI" id="CHEBI:456215"/>
        <dbReference type="EC" id="6.1.1.9"/>
    </reaction>
</comment>
<comment type="subunit">
    <text evidence="1">Monomer.</text>
</comment>
<comment type="subcellular location">
    <subcellularLocation>
        <location evidence="1">Cytoplasm</location>
    </subcellularLocation>
</comment>
<comment type="domain">
    <text evidence="1">ValRS has two distinct active sites: one for aminoacylation and one for editing. The misactivated threonine is translocated from the active site to the editing site.</text>
</comment>
<comment type="domain">
    <text evidence="1">The C-terminal coiled-coil domain is crucial for aminoacylation activity.</text>
</comment>
<comment type="similarity">
    <text evidence="1">Belongs to the class-I aminoacyl-tRNA synthetase family. ValS type 1 subfamily.</text>
</comment>
<feature type="chain" id="PRO_1000189249" description="Valine--tRNA ligase">
    <location>
        <begin position="1"/>
        <end position="994"/>
    </location>
</feature>
<feature type="region of interest" description="Disordered" evidence="2">
    <location>
        <begin position="332"/>
        <end position="356"/>
    </location>
</feature>
<feature type="region of interest" description="Disordered" evidence="2">
    <location>
        <begin position="691"/>
        <end position="713"/>
    </location>
</feature>
<feature type="coiled-coil region" evidence="1">
    <location>
        <begin position="928"/>
        <end position="994"/>
    </location>
</feature>
<feature type="short sequence motif" description="'HIGH' region">
    <location>
        <begin position="43"/>
        <end position="53"/>
    </location>
</feature>
<feature type="short sequence motif" description="'KMSKS' region">
    <location>
        <begin position="585"/>
        <end position="589"/>
    </location>
</feature>
<feature type="compositionally biased region" description="Low complexity" evidence="2">
    <location>
        <begin position="333"/>
        <end position="353"/>
    </location>
</feature>
<feature type="binding site" evidence="1">
    <location>
        <position position="588"/>
    </location>
    <ligand>
        <name>ATP</name>
        <dbReference type="ChEBI" id="CHEBI:30616"/>
    </ligand>
</feature>
<keyword id="KW-0030">Aminoacyl-tRNA synthetase</keyword>
<keyword id="KW-0067">ATP-binding</keyword>
<keyword id="KW-0175">Coiled coil</keyword>
<keyword id="KW-0963">Cytoplasm</keyword>
<keyword id="KW-0436">Ligase</keyword>
<keyword id="KW-0547">Nucleotide-binding</keyword>
<keyword id="KW-0648">Protein biosynthesis</keyword>
<proteinExistence type="inferred from homology"/>
<sequence length="994" mass="111465">MSQFTSSYDPTSFEARLYAEWEAAGHFKPSGVGQPYTILLPPPNVTGTLHMGHAFQQTLMDALVRYHRMCGDDTLWQVGTDHAGIATEMVVSRNMALEGRGETRDSLGREGFINKVWEWKQQSGDTIERQMRRLGVSADWSRSTFTMDAQPSAAVTEAFVRWYEEGLIYRGQRLVNWDPVLKTAISDLEVENVQEEGMLWSIRYPLSDGVTYEHIEHDAAGNETLRETRDSLIVATTRPETLLGDTAVMVHPEDRRYTALIGKTVTLPLTGRQIEVISDTYVEPTFGTGVVKVTPAHDFNDYQVGLRHRLPMIQVLDDAACIVSKTSIQSGIASGATSDTTDTPSDSDASNASNQHDTLIMPAHLAGLDRYEARKQILADLDAQGLLVAATPHTLQVPRGDRTGQVIEPYLTAQWFVRMETLAARGLELVERGAVRFVPPNWINTYRHWMENIQDWCISRQLWWGHRIPAWFDTQGCVYVGRSEAEVRAKHALGPEVTLTQDNDVLETWFSSQLWPFSTLGWPDPMAMAERGFERYLPSSVLVTGFDIIFFWVARMIMATDHFTGNVPFHDVYITGLIRDAQGQKMSKSKGNVLDPLDIIDGITLDDLVAKRTTGLMQPKLAEKIAKATRKEFPDGIAPHGADALRFTIAALATHGRDIKFDLGRAEGYKNFCNKLWNATRFVLMNTAGDTAHSPAQHQAGQDGQDVPRTPQPRTDAEQWILSRLAAVTAEAHAQFAAYRFDLLAQALYEFAWNEFCDWFVELAKPALNGDDTQAAASTRHTLLYVLETLLRLLHPLIPFITEELWCQVAPRLGIQATTLMLRPYPQPQQLETTAFANAAADVEWLKIMVSALRRIRSTLNVPPSRRISLLLQGGQEVDRRRITHFAIALHFLLKLEHIDWLSATTAAPPSATAIVGSLKLLVPLEGLIDVDAERARLDKEIKRVESEIDKSNGKLSNAVFVQNAPTAVVEQERSRLREWTTQLNGLRERRTTL</sequence>